<comment type="function">
    <text>Thionins are small plant proteins which are toxic to animal cells. They seem to exert their toxic effect at the level of the cell membrane. Their precise function is not known.</text>
</comment>
<comment type="subunit">
    <text evidence="2">Homodimer.</text>
</comment>
<comment type="subcellular location">
    <subcellularLocation>
        <location evidence="5">Secreted</location>
    </subcellularLocation>
</comment>
<comment type="similarity">
    <text evidence="5">Belongs to the plant thionin (TC 1.C.44) family. 4 C-C subfamily.</text>
</comment>
<feature type="signal peptide" evidence="1">
    <location>
        <begin position="1"/>
        <end position="27"/>
    </location>
</feature>
<feature type="chain" id="PRO_0000034114" description="Beta-hordothionin">
    <location>
        <begin position="28"/>
        <end position="72"/>
    </location>
</feature>
<feature type="propeptide" id="PRO_0000459410" description="Acidic domain" evidence="5">
    <location>
        <begin position="73"/>
        <end position="136"/>
    </location>
</feature>
<feature type="disulfide bond" evidence="2 6">
    <location>
        <begin position="30"/>
        <end position="66"/>
    </location>
</feature>
<feature type="disulfide bond" evidence="2 6">
    <location>
        <begin position="31"/>
        <end position="58"/>
    </location>
</feature>
<feature type="disulfide bond" evidence="2 6">
    <location>
        <begin position="39"/>
        <end position="56"/>
    </location>
</feature>
<feature type="disulfide bond" evidence="2 6">
    <location>
        <begin position="43"/>
        <end position="52"/>
    </location>
</feature>
<feature type="strand" evidence="7">
    <location>
        <begin position="29"/>
        <end position="33"/>
    </location>
</feature>
<feature type="helix" evidence="7">
    <location>
        <begin position="34"/>
        <end position="43"/>
    </location>
</feature>
<feature type="turn" evidence="7">
    <location>
        <begin position="44"/>
        <end position="46"/>
    </location>
</feature>
<feature type="helix" evidence="7">
    <location>
        <begin position="49"/>
        <end position="56"/>
    </location>
</feature>
<feature type="strand" evidence="7">
    <location>
        <begin position="62"/>
        <end position="65"/>
    </location>
</feature>
<protein>
    <recommendedName>
        <fullName evidence="3 4">Beta-hordothionin</fullName>
    </recommendedName>
</protein>
<name>THNB_HORVU</name>
<evidence type="ECO:0000255" key="1"/>
<evidence type="ECO:0000269" key="2">
    <source>
    </source>
</evidence>
<evidence type="ECO:0000303" key="3">
    <source ref="1"/>
</evidence>
<evidence type="ECO:0000303" key="4">
    <source ref="2"/>
</evidence>
<evidence type="ECO:0000305" key="5"/>
<evidence type="ECO:0007744" key="6">
    <source>
        <dbReference type="PDB" id="1WUW"/>
    </source>
</evidence>
<evidence type="ECO:0007829" key="7">
    <source>
        <dbReference type="PDB" id="1WUW"/>
    </source>
</evidence>
<sequence>MGSKGLKGVMVCLLILGLVLEHVQVEGKSCCRSTLGRNCYNLCRVRGAQKLCANACRCKLTSGLKCPSSFPKLALVSNSDEPDTIDYCNLGCRASMCDYMVNAAADDEEMKLYVEHCSDACVNFCNGDVGLTSLTA</sequence>
<proteinExistence type="evidence at protein level"/>
<gene>
    <name type="primary">THI1.2</name>
</gene>
<accession>P21742</accession>
<reference key="1">
    <citation type="journal article" date="1993" name="Plant Mol. Biol.">
        <title>Full-length cDNA clone encoding barley toxin beta-hordothionin.</title>
        <authorList>
            <person name="Rasmussen S.K."/>
            <person name="Rasmussen C.E."/>
        </authorList>
    </citation>
    <scope>NUCLEOTIDE SEQUENCE [MRNA]</scope>
    <source>
        <strain>cv. Bomi</strain>
        <tissue>Endosperm</tissue>
    </source>
</reference>
<reference key="2">
    <citation type="journal article" date="1986" name="FEBS Lett.">
        <title>Polyadenylation site heterogeneity in mRNA encoding the precursor of the barley toxin beta-hordothionin.</title>
        <authorList>
            <person name="Hernandez-Lucas C."/>
            <person name="Royo J."/>
            <person name="Paz-Ares J."/>
            <person name="Ponz F."/>
            <person name="Garcia-Olmedo F."/>
            <person name="Carbonero P."/>
        </authorList>
    </citation>
    <scope>NUCLEOTIDE SEQUENCE [MRNA] OF 10-136</scope>
</reference>
<reference key="3">
    <citation type="journal article" date="2005" name="FEBS Lett.">
        <title>Crystal structure of alpha-hordothionin at 1.9 Angstrom resolution.</title>
        <authorList>
            <person name="Johnson K.A."/>
            <person name="Kim E."/>
            <person name="Teeter M.M."/>
            <person name="Suh S.W."/>
            <person name="Stec B."/>
        </authorList>
    </citation>
    <scope>X-RAY CRYSTALLOGRAPHY (1.9 ANGSTROMS) OF 28-72</scope>
    <scope>DISULFIDE BOND</scope>
    <scope>SUBUNIT</scope>
</reference>
<keyword id="KW-0002">3D-structure</keyword>
<keyword id="KW-1015">Disulfide bond</keyword>
<keyword id="KW-0611">Plant defense</keyword>
<keyword id="KW-0964">Secreted</keyword>
<keyword id="KW-0732">Signal</keyword>
<keyword id="KW-0800">Toxin</keyword>
<dbReference type="EMBL" id="Z13008">
    <property type="protein sequence ID" value="CAA78352.1"/>
    <property type="molecule type" value="mRNA"/>
</dbReference>
<dbReference type="PIR" id="S22977">
    <property type="entry name" value="S22977"/>
</dbReference>
<dbReference type="PDB" id="1WUW">
    <property type="method" value="X-ray"/>
    <property type="resolution" value="1.90 A"/>
    <property type="chains" value="A/B=28-72"/>
</dbReference>
<dbReference type="PDBsum" id="1WUW"/>
<dbReference type="SMR" id="P21742"/>
<dbReference type="EvolutionaryTrace" id="P21742"/>
<dbReference type="ExpressionAtlas" id="P21742">
    <property type="expression patterns" value="baseline"/>
</dbReference>
<dbReference type="GO" id="GO:0005576">
    <property type="term" value="C:extracellular region"/>
    <property type="evidence" value="ECO:0007669"/>
    <property type="project" value="UniProtKB-SubCell"/>
</dbReference>
<dbReference type="GO" id="GO:0090729">
    <property type="term" value="F:toxin activity"/>
    <property type="evidence" value="ECO:0007669"/>
    <property type="project" value="UniProtKB-KW"/>
</dbReference>
<dbReference type="GO" id="GO:0006952">
    <property type="term" value="P:defense response"/>
    <property type="evidence" value="ECO:0007669"/>
    <property type="project" value="UniProtKB-KW"/>
</dbReference>
<dbReference type="FunFam" id="3.30.1350.10:FF:000001">
    <property type="entry name" value="Hellethionin-D"/>
    <property type="match status" value="1"/>
</dbReference>
<dbReference type="Gene3D" id="3.30.1350.10">
    <property type="entry name" value="Thionin-like"/>
    <property type="match status" value="1"/>
</dbReference>
<dbReference type="InterPro" id="IPR001010">
    <property type="entry name" value="Thionin"/>
</dbReference>
<dbReference type="InterPro" id="IPR036391">
    <property type="entry name" value="Thionin-like_sf"/>
</dbReference>
<dbReference type="PANTHER" id="PTHR33920:SF9">
    <property type="entry name" value="ALPHA-2-PUROTHIONIN"/>
    <property type="match status" value="1"/>
</dbReference>
<dbReference type="PANTHER" id="PTHR33920">
    <property type="entry name" value="THIONIN-2.1-RELATED"/>
    <property type="match status" value="1"/>
</dbReference>
<dbReference type="Pfam" id="PF00321">
    <property type="entry name" value="Thionin"/>
    <property type="match status" value="1"/>
</dbReference>
<dbReference type="PRINTS" id="PR00287">
    <property type="entry name" value="THIONIN"/>
</dbReference>
<dbReference type="SUPFAM" id="SSF57429">
    <property type="entry name" value="Crambin-like"/>
    <property type="match status" value="1"/>
</dbReference>
<dbReference type="PROSITE" id="PS00271">
    <property type="entry name" value="THIONIN"/>
    <property type="match status" value="1"/>
</dbReference>
<organism>
    <name type="scientific">Hordeum vulgare</name>
    <name type="common">Barley</name>
    <dbReference type="NCBI Taxonomy" id="4513"/>
    <lineage>
        <taxon>Eukaryota</taxon>
        <taxon>Viridiplantae</taxon>
        <taxon>Streptophyta</taxon>
        <taxon>Embryophyta</taxon>
        <taxon>Tracheophyta</taxon>
        <taxon>Spermatophyta</taxon>
        <taxon>Magnoliopsida</taxon>
        <taxon>Liliopsida</taxon>
        <taxon>Poales</taxon>
        <taxon>Poaceae</taxon>
        <taxon>BOP clade</taxon>
        <taxon>Pooideae</taxon>
        <taxon>Triticodae</taxon>
        <taxon>Triticeae</taxon>
        <taxon>Hordeinae</taxon>
        <taxon>Hordeum</taxon>
    </lineage>
</organism>